<dbReference type="EMBL" id="BA000026">
    <property type="protein sequence ID" value="BAC43871.1"/>
    <property type="molecule type" value="Genomic_DNA"/>
</dbReference>
<dbReference type="RefSeq" id="WP_011076907.1">
    <property type="nucleotide sequence ID" value="NC_004432.1"/>
</dbReference>
<dbReference type="SMR" id="Q8EWW9"/>
<dbReference type="FunCoup" id="Q8EWW9">
    <property type="interactions" value="273"/>
</dbReference>
<dbReference type="STRING" id="272633.gene:10731172"/>
<dbReference type="KEGG" id="mpe:MYPE810"/>
<dbReference type="eggNOG" id="COG0102">
    <property type="taxonomic scope" value="Bacteria"/>
</dbReference>
<dbReference type="HOGENOM" id="CLU_082184_2_2_14"/>
<dbReference type="InParanoid" id="Q8EWW9"/>
<dbReference type="Proteomes" id="UP000002522">
    <property type="component" value="Chromosome"/>
</dbReference>
<dbReference type="GO" id="GO:0022625">
    <property type="term" value="C:cytosolic large ribosomal subunit"/>
    <property type="evidence" value="ECO:0007669"/>
    <property type="project" value="TreeGrafter"/>
</dbReference>
<dbReference type="GO" id="GO:0003729">
    <property type="term" value="F:mRNA binding"/>
    <property type="evidence" value="ECO:0007669"/>
    <property type="project" value="TreeGrafter"/>
</dbReference>
<dbReference type="GO" id="GO:0003735">
    <property type="term" value="F:structural constituent of ribosome"/>
    <property type="evidence" value="ECO:0007669"/>
    <property type="project" value="InterPro"/>
</dbReference>
<dbReference type="GO" id="GO:0017148">
    <property type="term" value="P:negative regulation of translation"/>
    <property type="evidence" value="ECO:0007669"/>
    <property type="project" value="TreeGrafter"/>
</dbReference>
<dbReference type="GO" id="GO:0006412">
    <property type="term" value="P:translation"/>
    <property type="evidence" value="ECO:0007669"/>
    <property type="project" value="UniProtKB-UniRule"/>
</dbReference>
<dbReference type="CDD" id="cd00392">
    <property type="entry name" value="Ribosomal_L13"/>
    <property type="match status" value="1"/>
</dbReference>
<dbReference type="Gene3D" id="3.90.1180.10">
    <property type="entry name" value="Ribosomal protein L13"/>
    <property type="match status" value="1"/>
</dbReference>
<dbReference type="HAMAP" id="MF_01366">
    <property type="entry name" value="Ribosomal_uL13"/>
    <property type="match status" value="1"/>
</dbReference>
<dbReference type="InterPro" id="IPR005822">
    <property type="entry name" value="Ribosomal_uL13"/>
</dbReference>
<dbReference type="InterPro" id="IPR005823">
    <property type="entry name" value="Ribosomal_uL13_bac-type"/>
</dbReference>
<dbReference type="InterPro" id="IPR023563">
    <property type="entry name" value="Ribosomal_uL13_CS"/>
</dbReference>
<dbReference type="InterPro" id="IPR036899">
    <property type="entry name" value="Ribosomal_uL13_sf"/>
</dbReference>
<dbReference type="NCBIfam" id="TIGR01066">
    <property type="entry name" value="rplM_bact"/>
    <property type="match status" value="1"/>
</dbReference>
<dbReference type="PANTHER" id="PTHR11545:SF2">
    <property type="entry name" value="LARGE RIBOSOMAL SUBUNIT PROTEIN UL13M"/>
    <property type="match status" value="1"/>
</dbReference>
<dbReference type="PANTHER" id="PTHR11545">
    <property type="entry name" value="RIBOSOMAL PROTEIN L13"/>
    <property type="match status" value="1"/>
</dbReference>
<dbReference type="Pfam" id="PF00572">
    <property type="entry name" value="Ribosomal_L13"/>
    <property type="match status" value="1"/>
</dbReference>
<dbReference type="PIRSF" id="PIRSF002181">
    <property type="entry name" value="Ribosomal_L13"/>
    <property type="match status" value="1"/>
</dbReference>
<dbReference type="SUPFAM" id="SSF52161">
    <property type="entry name" value="Ribosomal protein L13"/>
    <property type="match status" value="1"/>
</dbReference>
<dbReference type="PROSITE" id="PS00783">
    <property type="entry name" value="RIBOSOMAL_L13"/>
    <property type="match status" value="1"/>
</dbReference>
<feature type="chain" id="PRO_1000144157" description="Large ribosomal subunit protein uL13">
    <location>
        <begin position="1"/>
        <end position="146"/>
    </location>
</feature>
<proteinExistence type="inferred from homology"/>
<comment type="function">
    <text evidence="1">This protein is one of the early assembly proteins of the 50S ribosomal subunit, although it is not seen to bind rRNA by itself. It is important during the early stages of 50S assembly.</text>
</comment>
<comment type="subunit">
    <text evidence="1">Part of the 50S ribosomal subunit.</text>
</comment>
<comment type="similarity">
    <text evidence="1">Belongs to the universal ribosomal protein uL13 family.</text>
</comment>
<keyword id="KW-1185">Reference proteome</keyword>
<keyword id="KW-0687">Ribonucleoprotein</keyword>
<keyword id="KW-0689">Ribosomal protein</keyword>
<organism>
    <name type="scientific">Malacoplasma penetrans (strain HF-2)</name>
    <name type="common">Mycoplasma penetrans</name>
    <dbReference type="NCBI Taxonomy" id="272633"/>
    <lineage>
        <taxon>Bacteria</taxon>
        <taxon>Bacillati</taxon>
        <taxon>Mycoplasmatota</taxon>
        <taxon>Mycoplasmoidales</taxon>
        <taxon>Mycoplasmoidaceae</taxon>
        <taxon>Malacoplasma</taxon>
    </lineage>
</organism>
<accession>Q8EWW9</accession>
<evidence type="ECO:0000255" key="1">
    <source>
        <dbReference type="HAMAP-Rule" id="MF_01366"/>
    </source>
</evidence>
<evidence type="ECO:0000305" key="2"/>
<gene>
    <name evidence="1" type="primary">rplM</name>
    <name type="ordered locus">MYPE810</name>
</gene>
<protein>
    <recommendedName>
        <fullName evidence="1">Large ribosomal subunit protein uL13</fullName>
    </recommendedName>
    <alternativeName>
        <fullName evidence="2">50S ribosomal protein L13</fullName>
    </alternativeName>
</protein>
<sequence length="146" mass="16556">MQKTTFVKNEAALANKKWYVIDASNLILGKLAVEAANILRGKNKVDFTPNVDCGDYLIIINSDKIVLSSDKADREKWYTHSGYIGGLKEKSGRLMIEKYSDKLIYGAIKGMLPKNTLSRYLIKKLFIYKDANHKQAAQKPMEIKLN</sequence>
<reference key="1">
    <citation type="journal article" date="2002" name="Nucleic Acids Res.">
        <title>The complete genomic sequence of Mycoplasma penetrans, an intracellular bacterial pathogen in humans.</title>
        <authorList>
            <person name="Sasaki Y."/>
            <person name="Ishikawa J."/>
            <person name="Yamashita A."/>
            <person name="Oshima K."/>
            <person name="Kenri T."/>
            <person name="Furuya K."/>
            <person name="Yoshino C."/>
            <person name="Horino A."/>
            <person name="Shiba T."/>
            <person name="Sasaki T."/>
            <person name="Hattori M."/>
        </authorList>
    </citation>
    <scope>NUCLEOTIDE SEQUENCE [LARGE SCALE GENOMIC DNA]</scope>
    <source>
        <strain>HF-2</strain>
    </source>
</reference>
<name>RL13_MALP2</name>